<name>HD6_ORYSI</name>
<organism>
    <name type="scientific">Oryza sativa subsp. indica</name>
    <name type="common">Rice</name>
    <dbReference type="NCBI Taxonomy" id="39946"/>
    <lineage>
        <taxon>Eukaryota</taxon>
        <taxon>Viridiplantae</taxon>
        <taxon>Streptophyta</taxon>
        <taxon>Embryophyta</taxon>
        <taxon>Tracheophyta</taxon>
        <taxon>Spermatophyta</taxon>
        <taxon>Magnoliopsida</taxon>
        <taxon>Liliopsida</taxon>
        <taxon>Poales</taxon>
        <taxon>Poaceae</taxon>
        <taxon>BOP clade</taxon>
        <taxon>Oryzoideae</taxon>
        <taxon>Oryzeae</taxon>
        <taxon>Oryzinae</taxon>
        <taxon>Oryza</taxon>
        <taxon>Oryza sativa</taxon>
    </lineage>
</organism>
<keyword id="KW-0067">ATP-binding</keyword>
<keyword id="KW-0963">Cytoplasm</keyword>
<keyword id="KW-0287">Flowering</keyword>
<keyword id="KW-0418">Kinase</keyword>
<keyword id="KW-0547">Nucleotide-binding</keyword>
<keyword id="KW-0723">Serine/threonine-protein kinase</keyword>
<keyword id="KW-0808">Transferase</keyword>
<proteinExistence type="evidence at transcript level"/>
<accession>Q9AR27</accession>
<comment type="function">
    <text evidence="1 3">Casein kinases are operationally defined by their preferential utilization of acidic proteins such as caseins as substrates. It can phosphorylate a large number of proteins (By similarity). Involved in photoperiod sensitivity (PS). Increases days-to-heading under natural day (ND) and long day (LD) conditions, but not under short day (SD) conditions (PubMed:11416158).</text>
</comment>
<comment type="catalytic activity">
    <reaction evidence="6">
        <text>L-seryl-[protein] + ATP = O-phospho-L-seryl-[protein] + ADP + H(+)</text>
        <dbReference type="Rhea" id="RHEA:17989"/>
        <dbReference type="Rhea" id="RHEA-COMP:9863"/>
        <dbReference type="Rhea" id="RHEA-COMP:11604"/>
        <dbReference type="ChEBI" id="CHEBI:15378"/>
        <dbReference type="ChEBI" id="CHEBI:29999"/>
        <dbReference type="ChEBI" id="CHEBI:30616"/>
        <dbReference type="ChEBI" id="CHEBI:83421"/>
        <dbReference type="ChEBI" id="CHEBI:456216"/>
        <dbReference type="EC" id="2.7.11.1"/>
    </reaction>
</comment>
<comment type="catalytic activity">
    <reaction evidence="6">
        <text>L-threonyl-[protein] + ATP = O-phospho-L-threonyl-[protein] + ADP + H(+)</text>
        <dbReference type="Rhea" id="RHEA:46608"/>
        <dbReference type="Rhea" id="RHEA-COMP:11060"/>
        <dbReference type="Rhea" id="RHEA-COMP:11605"/>
        <dbReference type="ChEBI" id="CHEBI:15378"/>
        <dbReference type="ChEBI" id="CHEBI:30013"/>
        <dbReference type="ChEBI" id="CHEBI:30616"/>
        <dbReference type="ChEBI" id="CHEBI:61977"/>
        <dbReference type="ChEBI" id="CHEBI:456216"/>
        <dbReference type="EC" id="2.7.11.1"/>
    </reaction>
</comment>
<comment type="subunit">
    <text evidence="1">Monomer.</text>
</comment>
<comment type="subcellular location">
    <subcellularLocation>
        <location evidence="1">Cytoplasm</location>
    </subcellularLocation>
</comment>
<comment type="PTM">
    <text evidence="1">Autophosphorylated.</text>
</comment>
<comment type="similarity">
    <text evidence="6">Belongs to the protein kinase superfamily. Ser/Thr protein kinase family. CK2 subfamily.</text>
</comment>
<gene>
    <name evidence="4" type="primary">HD6</name>
    <name evidence="5" type="synonym">CKA2</name>
</gene>
<protein>
    <recommendedName>
        <fullName evidence="6">Casein kinase II subunit alpha-2</fullName>
        <shortName evidence="5">OsCKA2</shortName>
        <ecNumber evidence="6">2.7.11.1</ecNumber>
    </recommendedName>
    <alternativeName>
        <fullName evidence="4">Protein HEADING DATE 6</fullName>
    </alternativeName>
</protein>
<sequence length="333" mass="39261">MSKARVYADVNVLRPKEYWDYEALTVQWGEQDDYEVVRKVGRGKYSEVFEGINVNNNEKCIIKILKPVKKKKIKREIKILQNLCGGPNIVKLLDIVRDQHSKTPSLIFEYVNNTDFKVLYPTLTDYDIRYYIYELLKALDYCHSQGIMHRDVKPHNVMIDHELRKLRLIDWGLAEFYHPGKEYNVRVASRYFKGPELLVDLQDYDYSLDMWSLGCMFAGMIFRKEPFFYGHDNHDQLVKIAKVLGTEALNAYLNKYHIELDPQLEALVGRHSRKPWSKFINADNQHLVSPEAVDFLDKLLRYDHQDRLTAREAMAHPYFLQVRAAENSRARPQ</sequence>
<feature type="chain" id="PRO_0000437452" description="Casein kinase II subunit alpha-2">
    <location>
        <begin position="1"/>
        <end position="333"/>
    </location>
</feature>
<feature type="domain" description="Protein kinase" evidence="2">
    <location>
        <begin position="34"/>
        <end position="319"/>
    </location>
</feature>
<feature type="active site" description="Proton acceptor" evidence="2">
    <location>
        <position position="151"/>
    </location>
</feature>
<feature type="binding site" evidence="2">
    <location>
        <begin position="40"/>
        <end position="48"/>
    </location>
    <ligand>
        <name>ATP</name>
        <dbReference type="ChEBI" id="CHEBI:30616"/>
    </ligand>
</feature>
<feature type="binding site" evidence="2">
    <location>
        <position position="63"/>
    </location>
    <ligand>
        <name>ATP</name>
        <dbReference type="ChEBI" id="CHEBI:30616"/>
    </ligand>
</feature>
<evidence type="ECO:0000250" key="1">
    <source>
        <dbReference type="UniProtKB" id="P48730"/>
    </source>
</evidence>
<evidence type="ECO:0000255" key="2">
    <source>
        <dbReference type="PROSITE-ProRule" id="PRU00159"/>
    </source>
</evidence>
<evidence type="ECO:0000269" key="3">
    <source>
    </source>
</evidence>
<evidence type="ECO:0000303" key="4">
    <source>
    </source>
</evidence>
<evidence type="ECO:0000303" key="5">
    <source>
    </source>
</evidence>
<evidence type="ECO:0000305" key="6"/>
<reference key="1">
    <citation type="journal article" date="2001" name="Proc. Natl. Acad. Sci. U.S.A.">
        <title>Hd6, a rice quantitative trait locus involved in photoperiod sensitivity, encodes the alpha subunit of protein kinase CK2.</title>
        <authorList>
            <person name="Takahashi Y."/>
            <person name="Shomura A."/>
            <person name="Sasaki T."/>
            <person name="Yano M."/>
        </authorList>
    </citation>
    <scope>NUCLEOTIDE SEQUENCE [GENOMIC DNA / MRNA]</scope>
    <scope>FUNCTION</scope>
    <source>
        <strain>cv. Kasalath</strain>
    </source>
</reference>
<reference key="2">
    <citation type="journal article" date="2011" name="Theor. Appl. Genet.">
        <title>Uncovering of major genetic factors generating naturally occurring variation in heading date among Asian rice cultivars.</title>
        <authorList>
            <person name="Ebana K."/>
            <person name="Shibaya T."/>
            <person name="Wu J."/>
            <person name="Matsubara K."/>
            <person name="Kanamori H."/>
            <person name="Yamane H."/>
            <person name="Yamanouchi U."/>
            <person name="Mizubayashi T."/>
            <person name="Kono I."/>
            <person name="Shomura A."/>
            <person name="Ito S."/>
            <person name="Ando T."/>
            <person name="Hori K."/>
            <person name="Matsumoto T."/>
            <person name="Yano M."/>
        </authorList>
    </citation>
    <scope>NUCLEOTIDE SEQUENCE [GENOMIC DNA]</scope>
    <source>
        <strain>cv. Kasalath</strain>
        <strain>cv. Shuusoushu</strain>
    </source>
</reference>
<reference key="3">
    <citation type="submission" date="2005-08" db="EMBL/GenBank/DDBJ databases">
        <title>Detection of DNA methylation in Hd1, Hd3a, and Hd6 genes in rice KDML 105 (Oryza sativa L.).</title>
        <authorList>
            <person name="Roongsattham P."/>
            <person name="Peyachoknagul S."/>
        </authorList>
    </citation>
    <scope>NUCLEOTIDE SEQUENCE [GENOMIC DNA]</scope>
    <source>
        <strain>cv. KDML 105</strain>
        <strain>cv. Suphan Buri 1</strain>
    </source>
</reference>
<dbReference type="EC" id="2.7.11.1" evidence="6"/>
<dbReference type="EMBL" id="AB036786">
    <property type="protein sequence ID" value="BAB21589.1"/>
    <property type="molecule type" value="Genomic_DNA"/>
</dbReference>
<dbReference type="EMBL" id="AB036788">
    <property type="protein sequence ID" value="BAB21591.1"/>
    <property type="molecule type" value="mRNA"/>
</dbReference>
<dbReference type="EMBL" id="AB435660">
    <property type="protein sequence ID" value="BAG82852.1"/>
    <property type="molecule type" value="Genomic_DNA"/>
</dbReference>
<dbReference type="EMBL" id="AB435661">
    <property type="protein sequence ID" value="BAG82853.1"/>
    <property type="molecule type" value="Genomic_DNA"/>
</dbReference>
<dbReference type="EMBL" id="DQ157463">
    <property type="protein sequence ID" value="ABB17668.1"/>
    <property type="molecule type" value="Genomic_DNA"/>
</dbReference>
<dbReference type="EMBL" id="DQ157464">
    <property type="protein sequence ID" value="ABB17669.1"/>
    <property type="molecule type" value="Genomic_DNA"/>
</dbReference>
<dbReference type="SMR" id="Q9AR27"/>
<dbReference type="GO" id="GO:0005829">
    <property type="term" value="C:cytosol"/>
    <property type="evidence" value="ECO:0007669"/>
    <property type="project" value="TreeGrafter"/>
</dbReference>
<dbReference type="GO" id="GO:0005634">
    <property type="term" value="C:nucleus"/>
    <property type="evidence" value="ECO:0007669"/>
    <property type="project" value="TreeGrafter"/>
</dbReference>
<dbReference type="GO" id="GO:0005956">
    <property type="term" value="C:protein kinase CK2 complex"/>
    <property type="evidence" value="ECO:0007669"/>
    <property type="project" value="TreeGrafter"/>
</dbReference>
<dbReference type="GO" id="GO:0005524">
    <property type="term" value="F:ATP binding"/>
    <property type="evidence" value="ECO:0007669"/>
    <property type="project" value="UniProtKB-KW"/>
</dbReference>
<dbReference type="GO" id="GO:0106310">
    <property type="term" value="F:protein serine kinase activity"/>
    <property type="evidence" value="ECO:0007669"/>
    <property type="project" value="RHEA"/>
</dbReference>
<dbReference type="GO" id="GO:0004674">
    <property type="term" value="F:protein serine/threonine kinase activity"/>
    <property type="evidence" value="ECO:0007669"/>
    <property type="project" value="UniProtKB-KW"/>
</dbReference>
<dbReference type="GO" id="GO:0009908">
    <property type="term" value="P:flower development"/>
    <property type="evidence" value="ECO:0007669"/>
    <property type="project" value="UniProtKB-KW"/>
</dbReference>
<dbReference type="GO" id="GO:0010229">
    <property type="term" value="P:inflorescence development"/>
    <property type="evidence" value="ECO:0000315"/>
    <property type="project" value="Gramene"/>
</dbReference>
<dbReference type="GO" id="GO:0009648">
    <property type="term" value="P:photoperiodism"/>
    <property type="evidence" value="ECO:0000315"/>
    <property type="project" value="Gramene"/>
</dbReference>
<dbReference type="GO" id="GO:0051726">
    <property type="term" value="P:regulation of cell cycle"/>
    <property type="evidence" value="ECO:0007669"/>
    <property type="project" value="TreeGrafter"/>
</dbReference>
<dbReference type="CDD" id="cd14132">
    <property type="entry name" value="STKc_CK2_alpha"/>
    <property type="match status" value="1"/>
</dbReference>
<dbReference type="FunFam" id="1.10.510.10:FF:000059">
    <property type="entry name" value="Casein kinase II subunit alpha"/>
    <property type="match status" value="1"/>
</dbReference>
<dbReference type="FunFam" id="3.30.200.20:FF:000088">
    <property type="entry name" value="Casein kinase II subunit alpha"/>
    <property type="match status" value="1"/>
</dbReference>
<dbReference type="Gene3D" id="3.30.200.20">
    <property type="entry name" value="Phosphorylase Kinase, domain 1"/>
    <property type="match status" value="1"/>
</dbReference>
<dbReference type="Gene3D" id="1.10.510.10">
    <property type="entry name" value="Transferase(Phosphotransferase) domain 1"/>
    <property type="match status" value="1"/>
</dbReference>
<dbReference type="InterPro" id="IPR045216">
    <property type="entry name" value="CK2_alpha"/>
</dbReference>
<dbReference type="InterPro" id="IPR011009">
    <property type="entry name" value="Kinase-like_dom_sf"/>
</dbReference>
<dbReference type="InterPro" id="IPR000719">
    <property type="entry name" value="Prot_kinase_dom"/>
</dbReference>
<dbReference type="InterPro" id="IPR017441">
    <property type="entry name" value="Protein_kinase_ATP_BS"/>
</dbReference>
<dbReference type="InterPro" id="IPR008271">
    <property type="entry name" value="Ser/Thr_kinase_AS"/>
</dbReference>
<dbReference type="PANTHER" id="PTHR24054">
    <property type="entry name" value="CASEIN KINASE II SUBUNIT ALPHA"/>
    <property type="match status" value="1"/>
</dbReference>
<dbReference type="PANTHER" id="PTHR24054:SF56">
    <property type="entry name" value="CASEIN KINASE II SUBUNIT ALPHA-1"/>
    <property type="match status" value="1"/>
</dbReference>
<dbReference type="Pfam" id="PF00069">
    <property type="entry name" value="Pkinase"/>
    <property type="match status" value="1"/>
</dbReference>
<dbReference type="SMART" id="SM00220">
    <property type="entry name" value="S_TKc"/>
    <property type="match status" value="1"/>
</dbReference>
<dbReference type="SUPFAM" id="SSF56112">
    <property type="entry name" value="Protein kinase-like (PK-like)"/>
    <property type="match status" value="1"/>
</dbReference>
<dbReference type="PROSITE" id="PS00107">
    <property type="entry name" value="PROTEIN_KINASE_ATP"/>
    <property type="match status" value="1"/>
</dbReference>
<dbReference type="PROSITE" id="PS50011">
    <property type="entry name" value="PROTEIN_KINASE_DOM"/>
    <property type="match status" value="1"/>
</dbReference>
<dbReference type="PROSITE" id="PS00108">
    <property type="entry name" value="PROTEIN_KINASE_ST"/>
    <property type="match status" value="1"/>
</dbReference>